<evidence type="ECO:0000255" key="1">
    <source>
        <dbReference type="HAMAP-Rule" id="MF_00141"/>
    </source>
</evidence>
<reference key="1">
    <citation type="journal article" date="2004" name="Genome Res.">
        <title>The complete genome and proteome of Mycoplasma mobile.</title>
        <authorList>
            <person name="Jaffe J.D."/>
            <person name="Stange-Thomann N."/>
            <person name="Smith C."/>
            <person name="DeCaprio D."/>
            <person name="Fisher S."/>
            <person name="Butler J."/>
            <person name="Calvo S."/>
            <person name="Elkins T."/>
            <person name="FitzGerald M.G."/>
            <person name="Hafez N."/>
            <person name="Kodira C.D."/>
            <person name="Major J."/>
            <person name="Wang S."/>
            <person name="Wilkinson J."/>
            <person name="Nicol R."/>
            <person name="Nusbaum C."/>
            <person name="Birren B."/>
            <person name="Berg H.C."/>
            <person name="Church G.M."/>
        </authorList>
    </citation>
    <scope>NUCLEOTIDE SEQUENCE [LARGE SCALE GENOMIC DNA]</scope>
    <source>
        <strain>ATCC 43663 / NCTC 11711 / 163 K</strain>
    </source>
</reference>
<dbReference type="EMBL" id="AE017308">
    <property type="protein sequence ID" value="AAT28037.1"/>
    <property type="molecule type" value="Genomic_DNA"/>
</dbReference>
<dbReference type="RefSeq" id="WP_011265071.1">
    <property type="nucleotide sequence ID" value="NC_006908.1"/>
</dbReference>
<dbReference type="SMR" id="Q6KH93"/>
<dbReference type="STRING" id="267748.MMOB5510"/>
<dbReference type="KEGG" id="mmo:MMOB5510"/>
<dbReference type="eggNOG" id="COG0231">
    <property type="taxonomic scope" value="Bacteria"/>
</dbReference>
<dbReference type="HOGENOM" id="CLU_074944_2_1_14"/>
<dbReference type="OrthoDB" id="9801844at2"/>
<dbReference type="UniPathway" id="UPA00345"/>
<dbReference type="Proteomes" id="UP000009072">
    <property type="component" value="Chromosome"/>
</dbReference>
<dbReference type="GO" id="GO:0005737">
    <property type="term" value="C:cytoplasm"/>
    <property type="evidence" value="ECO:0007669"/>
    <property type="project" value="UniProtKB-SubCell"/>
</dbReference>
<dbReference type="GO" id="GO:0003746">
    <property type="term" value="F:translation elongation factor activity"/>
    <property type="evidence" value="ECO:0007669"/>
    <property type="project" value="UniProtKB-UniRule"/>
</dbReference>
<dbReference type="GO" id="GO:0043043">
    <property type="term" value="P:peptide biosynthetic process"/>
    <property type="evidence" value="ECO:0007669"/>
    <property type="project" value="InterPro"/>
</dbReference>
<dbReference type="CDD" id="cd04470">
    <property type="entry name" value="S1_EF-P_repeat_1"/>
    <property type="match status" value="1"/>
</dbReference>
<dbReference type="CDD" id="cd05794">
    <property type="entry name" value="S1_EF-P_repeat_2"/>
    <property type="match status" value="1"/>
</dbReference>
<dbReference type="FunFam" id="2.30.30.30:FF:000003">
    <property type="entry name" value="Elongation factor P"/>
    <property type="match status" value="1"/>
</dbReference>
<dbReference type="FunFam" id="2.40.50.140:FF:000004">
    <property type="entry name" value="Elongation factor P"/>
    <property type="match status" value="1"/>
</dbReference>
<dbReference type="FunFam" id="2.40.50.140:FF:000009">
    <property type="entry name" value="Elongation factor P"/>
    <property type="match status" value="1"/>
</dbReference>
<dbReference type="Gene3D" id="2.30.30.30">
    <property type="match status" value="1"/>
</dbReference>
<dbReference type="Gene3D" id="2.40.50.140">
    <property type="entry name" value="Nucleic acid-binding proteins"/>
    <property type="match status" value="2"/>
</dbReference>
<dbReference type="HAMAP" id="MF_00141">
    <property type="entry name" value="EF_P"/>
    <property type="match status" value="1"/>
</dbReference>
<dbReference type="InterPro" id="IPR015365">
    <property type="entry name" value="Elong-fact-P_C"/>
</dbReference>
<dbReference type="InterPro" id="IPR012340">
    <property type="entry name" value="NA-bd_OB-fold"/>
</dbReference>
<dbReference type="InterPro" id="IPR014722">
    <property type="entry name" value="Rib_uL2_dom2"/>
</dbReference>
<dbReference type="InterPro" id="IPR020599">
    <property type="entry name" value="Transl_elong_fac_P/YeiP"/>
</dbReference>
<dbReference type="InterPro" id="IPR013185">
    <property type="entry name" value="Transl_elong_KOW-like"/>
</dbReference>
<dbReference type="InterPro" id="IPR001059">
    <property type="entry name" value="Transl_elong_P/YeiP_cen"/>
</dbReference>
<dbReference type="InterPro" id="IPR011768">
    <property type="entry name" value="Transl_elongation_fac_P"/>
</dbReference>
<dbReference type="InterPro" id="IPR008991">
    <property type="entry name" value="Translation_prot_SH3-like_sf"/>
</dbReference>
<dbReference type="NCBIfam" id="TIGR00038">
    <property type="entry name" value="efp"/>
    <property type="match status" value="1"/>
</dbReference>
<dbReference type="NCBIfam" id="NF001810">
    <property type="entry name" value="PRK00529.1"/>
    <property type="match status" value="1"/>
</dbReference>
<dbReference type="PANTHER" id="PTHR30053">
    <property type="entry name" value="ELONGATION FACTOR P"/>
    <property type="match status" value="1"/>
</dbReference>
<dbReference type="PANTHER" id="PTHR30053:SF12">
    <property type="entry name" value="ELONGATION FACTOR P (EF-P) FAMILY PROTEIN"/>
    <property type="match status" value="1"/>
</dbReference>
<dbReference type="Pfam" id="PF01132">
    <property type="entry name" value="EFP"/>
    <property type="match status" value="1"/>
</dbReference>
<dbReference type="Pfam" id="PF08207">
    <property type="entry name" value="EFP_N"/>
    <property type="match status" value="1"/>
</dbReference>
<dbReference type="Pfam" id="PF09285">
    <property type="entry name" value="Elong-fact-P_C"/>
    <property type="match status" value="1"/>
</dbReference>
<dbReference type="PIRSF" id="PIRSF005901">
    <property type="entry name" value="EF-P"/>
    <property type="match status" value="1"/>
</dbReference>
<dbReference type="SMART" id="SM01185">
    <property type="entry name" value="EFP"/>
    <property type="match status" value="1"/>
</dbReference>
<dbReference type="SMART" id="SM00841">
    <property type="entry name" value="Elong-fact-P_C"/>
    <property type="match status" value="1"/>
</dbReference>
<dbReference type="SUPFAM" id="SSF50249">
    <property type="entry name" value="Nucleic acid-binding proteins"/>
    <property type="match status" value="2"/>
</dbReference>
<dbReference type="SUPFAM" id="SSF50104">
    <property type="entry name" value="Translation proteins SH3-like domain"/>
    <property type="match status" value="1"/>
</dbReference>
<gene>
    <name evidence="1" type="primary">efp</name>
    <name type="ordered locus">MMOB5510</name>
</gene>
<comment type="function">
    <text evidence="1">Involved in peptide bond synthesis. Stimulates efficient translation and peptide-bond synthesis on native or reconstituted 70S ribosomes in vitro. Probably functions indirectly by altering the affinity of the ribosome for aminoacyl-tRNA, thus increasing their reactivity as acceptors for peptidyl transferase.</text>
</comment>
<comment type="pathway">
    <text evidence="1">Protein biosynthesis; polypeptide chain elongation.</text>
</comment>
<comment type="subcellular location">
    <subcellularLocation>
        <location evidence="1">Cytoplasm</location>
    </subcellularLocation>
</comment>
<comment type="similarity">
    <text evidence="1">Belongs to the elongation factor P family.</text>
</comment>
<name>EFP_MYCM1</name>
<accession>Q6KH93</accession>
<proteinExistence type="inferred from homology"/>
<sequence>MVNVNNFKNGITFQEEDEIFSVIEAQHSKQGRGQASVKAKVKNLRTGAITIKSYTGGDKVKKAHIEKIEMNFLYDEGENIVLMDNATYEQISIPKTRVEWEMNFLVEGAKVHIRKFADEILDIEIPVNIELKVIDAPEAVKGNTSSNPQKKVKVETGFELETPLFIKEGEIIIVSSETGKYMGKGNNK</sequence>
<keyword id="KW-0963">Cytoplasm</keyword>
<keyword id="KW-0251">Elongation factor</keyword>
<keyword id="KW-0648">Protein biosynthesis</keyword>
<keyword id="KW-1185">Reference proteome</keyword>
<protein>
    <recommendedName>
        <fullName evidence="1">Elongation factor P</fullName>
        <shortName evidence="1">EF-P</shortName>
    </recommendedName>
</protein>
<organism>
    <name type="scientific">Mycoplasma mobile (strain ATCC 43663 / 163K / NCTC 11711)</name>
    <name type="common">Mesomycoplasma mobile</name>
    <dbReference type="NCBI Taxonomy" id="267748"/>
    <lineage>
        <taxon>Bacteria</taxon>
        <taxon>Bacillati</taxon>
        <taxon>Mycoplasmatota</taxon>
        <taxon>Mycoplasmoidales</taxon>
        <taxon>Metamycoplasmataceae</taxon>
        <taxon>Mesomycoplasma</taxon>
    </lineage>
</organism>
<feature type="chain" id="PRO_0000094286" description="Elongation factor P">
    <location>
        <begin position="1"/>
        <end position="188"/>
    </location>
</feature>